<name>IBP1_BOVIN</name>
<proteinExistence type="evidence at transcript level"/>
<gene>
    <name type="primary">IGFBP1</name>
</gene>
<feature type="signal peptide">
    <location>
        <begin position="1"/>
        <end position="25"/>
    </location>
</feature>
<feature type="chain" id="PRO_0000014364" description="Insulin-like growth factor-binding protein 1">
    <location>
        <begin position="26"/>
        <end position="263"/>
    </location>
</feature>
<feature type="domain" description="IGFBP N-terminal" evidence="4">
    <location>
        <begin position="28"/>
        <end position="109"/>
    </location>
</feature>
<feature type="domain" description="Thyroglobulin type-1" evidence="3">
    <location>
        <begin position="177"/>
        <end position="255"/>
    </location>
</feature>
<feature type="region of interest" description="Disordered" evidence="5">
    <location>
        <begin position="102"/>
        <end position="131"/>
    </location>
</feature>
<feature type="short sequence motif" description="Cell attachment site">
    <location>
        <begin position="250"/>
        <end position="252"/>
    </location>
</feature>
<feature type="compositionally biased region" description="Polar residues" evidence="5">
    <location>
        <begin position="122"/>
        <end position="131"/>
    </location>
</feature>
<feature type="modified residue" description="Phosphoserine" evidence="1">
    <location>
        <position position="122"/>
    </location>
</feature>
<feature type="modified residue" description="Phosphoserine" evidence="1">
    <location>
        <position position="127"/>
    </location>
</feature>
<feature type="modified residue" description="Phosphoserine" evidence="1">
    <location>
        <position position="130"/>
    </location>
</feature>
<feature type="modified residue" description="Phosphoserine" evidence="1">
    <location>
        <position position="148"/>
    </location>
</feature>
<feature type="modified residue" description="Phosphoserine" evidence="1">
    <location>
        <position position="160"/>
    </location>
</feature>
<feature type="modified residue" description="Phosphotyrosine" evidence="1">
    <location>
        <position position="162"/>
    </location>
</feature>
<feature type="modified residue" description="Phosphoserine" evidence="1">
    <location>
        <position position="246"/>
    </location>
</feature>
<feature type="disulfide bond" evidence="4">
    <location>
        <begin position="32"/>
        <end position="59"/>
    </location>
</feature>
<feature type="disulfide bond" evidence="4">
    <location>
        <begin position="35"/>
        <end position="61"/>
    </location>
</feature>
<feature type="disulfide bond" evidence="4">
    <location>
        <begin position="43"/>
        <end position="62"/>
    </location>
</feature>
<feature type="disulfide bond" evidence="4">
    <location>
        <begin position="50"/>
        <end position="65"/>
    </location>
</feature>
<feature type="disulfide bond" evidence="4">
    <location>
        <begin position="73"/>
        <end position="86"/>
    </location>
</feature>
<feature type="disulfide bond" evidence="4">
    <location>
        <begin position="80"/>
        <end position="106"/>
    </location>
</feature>
<feature type="disulfide bond" evidence="3">
    <location>
        <begin position="180"/>
        <end position="210"/>
    </location>
</feature>
<feature type="disulfide bond" evidence="3">
    <location>
        <begin position="221"/>
        <end position="232"/>
    </location>
</feature>
<feature type="disulfide bond" evidence="3">
    <location>
        <begin position="234"/>
        <end position="255"/>
    </location>
</feature>
<feature type="sequence conflict" description="In Ref. 1; CAA38723." evidence="6" ref="1">
    <original>TPS</original>
    <variation>SPC</variation>
    <location>
        <begin position="109"/>
        <end position="111"/>
    </location>
</feature>
<organism>
    <name type="scientific">Bos taurus</name>
    <name type="common">Bovine</name>
    <dbReference type="NCBI Taxonomy" id="9913"/>
    <lineage>
        <taxon>Eukaryota</taxon>
        <taxon>Metazoa</taxon>
        <taxon>Chordata</taxon>
        <taxon>Craniata</taxon>
        <taxon>Vertebrata</taxon>
        <taxon>Euteleostomi</taxon>
        <taxon>Mammalia</taxon>
        <taxon>Eutheria</taxon>
        <taxon>Laurasiatheria</taxon>
        <taxon>Artiodactyla</taxon>
        <taxon>Ruminantia</taxon>
        <taxon>Pecora</taxon>
        <taxon>Bovidae</taxon>
        <taxon>Bovinae</taxon>
        <taxon>Bos</taxon>
    </lineage>
</organism>
<reference key="1">
    <citation type="journal article" date="1991" name="DNA Seq.">
        <title>Cloning and characterization of a cDNA encoding the bovine insulin-like growth factor binding protein 1 (bIGFBP-1).</title>
        <authorList>
            <person name="Sneyers M."/>
            <person name="Kettmann R."/>
            <person name="Massart S."/>
            <person name="Renaville R."/>
            <person name="Burny A."/>
            <person name="Portetelle D."/>
        </authorList>
    </citation>
    <scope>NUCLEOTIDE SEQUENCE [MRNA]</scope>
    <source>
        <strain>Holstein-Friesian</strain>
        <tissue>Liver</tissue>
    </source>
</reference>
<reference key="2">
    <citation type="submission" date="2005-12" db="EMBL/GenBank/DDBJ databases">
        <authorList>
            <consortium name="NIH - Mammalian Gene Collection (MGC) project"/>
        </authorList>
    </citation>
    <scope>NUCLEOTIDE SEQUENCE [LARGE SCALE MRNA]</scope>
    <source>
        <strain>Crossbred X Angus</strain>
        <tissue>Liver</tissue>
    </source>
</reference>
<sequence>MPEVLAVRAWPLLLSLAVQLGATVGAPQPWRCAPCSAERMALCPPVPASCPELTRSAGCGCCPMCALPLGAACGVATARCARGLSCRALPGEPRPLHALTRGQGACMTTPSDEATDTKDTTSPENVSPESSEITQEQLLDNFHLMAESSEDLPILWNAISNYESLRALEISDVKKWKEPCQRELYKVLDRLAREQQKAGDKLYKFYLPNCNKNGFYHSKQCETSLEGEPGLCWCVYPWSGKRILGSVAVRGDPKCQQYFNLQN</sequence>
<comment type="function">
    <text evidence="1 2">Multifunctional protein that plays a critical role in regulating the availability of IGFs such as IGF1 and IGF2 to their receptors and thereby regulates IGF-mediated cellular processes including cell migration, proliferation, differentiation or apoptosis in a cell-type specific manner. Also plays a positive role in cell migration by interacting with integrin ITGA5:ITGB1 through its RGD motif. Mechanistically, binding to integrins leads to activation of focal adhesion kinase/PTK2 and stimulation of the mitogen-activated protein kinase (MAPK) pathway (By similarity). Regulates cardiomyocyte apoptosis by suppressing HIF-1alpha/HIF1A degradation through ubiquitination (By similarity).</text>
</comment>
<comment type="subunit">
    <text evidence="1 2">Binds equally well IGF1 and IGF2. Interacts with integrin ITGA5:ITGB1. Interacts with VHL; this interaction inhibits HIF1A degradation (By similarity).</text>
</comment>
<comment type="subcellular location">
    <subcellularLocation>
        <location evidence="1">Secreted</location>
    </subcellularLocation>
</comment>
<evidence type="ECO:0000250" key="1">
    <source>
        <dbReference type="UniProtKB" id="P08833"/>
    </source>
</evidence>
<evidence type="ECO:0000250" key="2">
    <source>
        <dbReference type="UniProtKB" id="P21743"/>
    </source>
</evidence>
<evidence type="ECO:0000255" key="3">
    <source>
        <dbReference type="PROSITE-ProRule" id="PRU00500"/>
    </source>
</evidence>
<evidence type="ECO:0000255" key="4">
    <source>
        <dbReference type="PROSITE-ProRule" id="PRU00653"/>
    </source>
</evidence>
<evidence type="ECO:0000256" key="5">
    <source>
        <dbReference type="SAM" id="MobiDB-lite"/>
    </source>
</evidence>
<evidence type="ECO:0000305" key="6"/>
<protein>
    <recommendedName>
        <fullName>Insulin-like growth factor-binding protein 1</fullName>
        <shortName>IBP-1</shortName>
        <shortName>IGF-binding protein 1</shortName>
        <shortName>IGFBP-1</shortName>
    </recommendedName>
    <alternativeName>
        <fullName>bIGFBP-1</fullName>
    </alternativeName>
</protein>
<accession>P24591</accession>
<accession>Q2T9Z3</accession>
<keyword id="KW-1015">Disulfide bond</keyword>
<keyword id="KW-0340">Growth factor binding</keyword>
<keyword id="KW-0597">Phosphoprotein</keyword>
<keyword id="KW-1185">Reference proteome</keyword>
<keyword id="KW-0964">Secreted</keyword>
<keyword id="KW-0732">Signal</keyword>
<dbReference type="EMBL" id="X54979">
    <property type="protein sequence ID" value="CAA38723.1"/>
    <property type="molecule type" value="mRNA"/>
</dbReference>
<dbReference type="EMBL" id="BC111197">
    <property type="protein sequence ID" value="AAI11198.1"/>
    <property type="molecule type" value="mRNA"/>
</dbReference>
<dbReference type="PIR" id="S23009">
    <property type="entry name" value="S23009"/>
</dbReference>
<dbReference type="RefSeq" id="NP_776979.2">
    <property type="nucleotide sequence ID" value="NM_174554.3"/>
</dbReference>
<dbReference type="SMR" id="P24591"/>
<dbReference type="FunCoup" id="P24591">
    <property type="interactions" value="57"/>
</dbReference>
<dbReference type="STRING" id="9913.ENSBTAP00000055280"/>
<dbReference type="MEROPS" id="I31.951"/>
<dbReference type="PaxDb" id="9913-ENSBTAP00000055280"/>
<dbReference type="Ensembl" id="ENSBTAT00000064194.3">
    <property type="protein sequence ID" value="ENSBTAP00000055280.1"/>
    <property type="gene ID" value="ENSBTAG00000046768.3"/>
</dbReference>
<dbReference type="GeneID" id="282259"/>
<dbReference type="KEGG" id="bta:282259"/>
<dbReference type="CTD" id="3484"/>
<dbReference type="VEuPathDB" id="HostDB:ENSBTAG00000046768"/>
<dbReference type="VGNC" id="VGNC:30083">
    <property type="gene designation" value="IGFBP1"/>
</dbReference>
<dbReference type="eggNOG" id="ENOG502QWRP">
    <property type="taxonomic scope" value="Eukaryota"/>
</dbReference>
<dbReference type="GeneTree" id="ENSGT00940000157394"/>
<dbReference type="HOGENOM" id="CLU_070833_3_0_1"/>
<dbReference type="InParanoid" id="P24591"/>
<dbReference type="OMA" id="TRGDPNC"/>
<dbReference type="OrthoDB" id="9926277at2759"/>
<dbReference type="TreeFam" id="TF331211"/>
<dbReference type="Reactome" id="R-BTA-381426">
    <property type="pathway name" value="Regulation of Insulin-like Growth Factor (IGF) transport and uptake by Insulin-like Growth Factor Binding Proteins (IGFBPs)"/>
</dbReference>
<dbReference type="Reactome" id="R-BTA-8957275">
    <property type="pathway name" value="Post-translational protein phosphorylation"/>
</dbReference>
<dbReference type="Proteomes" id="UP000009136">
    <property type="component" value="Chromosome 4"/>
</dbReference>
<dbReference type="Bgee" id="ENSBTAG00000046768">
    <property type="expression patterns" value="Expressed in liver and 38 other cell types or tissues"/>
</dbReference>
<dbReference type="GO" id="GO:0005615">
    <property type="term" value="C:extracellular space"/>
    <property type="evidence" value="ECO:0000318"/>
    <property type="project" value="GO_Central"/>
</dbReference>
<dbReference type="GO" id="GO:0005794">
    <property type="term" value="C:Golgi apparatus"/>
    <property type="evidence" value="ECO:0007669"/>
    <property type="project" value="Ensembl"/>
</dbReference>
<dbReference type="GO" id="GO:0031994">
    <property type="term" value="F:insulin-like growth factor I binding"/>
    <property type="evidence" value="ECO:0000318"/>
    <property type="project" value="GO_Central"/>
</dbReference>
<dbReference type="GO" id="GO:0031995">
    <property type="term" value="F:insulin-like growth factor II binding"/>
    <property type="evidence" value="ECO:0000318"/>
    <property type="project" value="GO_Central"/>
</dbReference>
<dbReference type="GO" id="GO:0043567">
    <property type="term" value="P:regulation of insulin-like growth factor receptor signaling pathway"/>
    <property type="evidence" value="ECO:0000318"/>
    <property type="project" value="GO_Central"/>
</dbReference>
<dbReference type="GO" id="GO:0032868">
    <property type="term" value="P:response to insulin"/>
    <property type="evidence" value="ECO:0007669"/>
    <property type="project" value="Ensembl"/>
</dbReference>
<dbReference type="CDD" id="cd00191">
    <property type="entry name" value="TY"/>
    <property type="match status" value="1"/>
</dbReference>
<dbReference type="FunFam" id="4.10.40.20:FF:000001">
    <property type="entry name" value="Insulin-like growth factor binding protein 5"/>
    <property type="match status" value="1"/>
</dbReference>
<dbReference type="FunFam" id="4.10.800.10:FF:000002">
    <property type="entry name" value="Insulin-like growth factor-binding protein 2"/>
    <property type="match status" value="1"/>
</dbReference>
<dbReference type="Gene3D" id="4.10.40.20">
    <property type="match status" value="1"/>
</dbReference>
<dbReference type="Gene3D" id="4.10.800.10">
    <property type="entry name" value="Thyroglobulin type-1"/>
    <property type="match status" value="1"/>
</dbReference>
<dbReference type="InterPro" id="IPR009030">
    <property type="entry name" value="Growth_fac_rcpt_cys_sf"/>
</dbReference>
<dbReference type="InterPro" id="IPR000867">
    <property type="entry name" value="IGFBP-like"/>
</dbReference>
<dbReference type="InterPro" id="IPR022322">
    <property type="entry name" value="IGFBP1"/>
</dbReference>
<dbReference type="InterPro" id="IPR022321">
    <property type="entry name" value="IGFBP_1-6_chordata"/>
</dbReference>
<dbReference type="InterPro" id="IPR017891">
    <property type="entry name" value="Insulin_GF-bd_Cys-rich_CS"/>
</dbReference>
<dbReference type="InterPro" id="IPR000716">
    <property type="entry name" value="Thyroglobulin_1"/>
</dbReference>
<dbReference type="InterPro" id="IPR036857">
    <property type="entry name" value="Thyroglobulin_1_sf"/>
</dbReference>
<dbReference type="PANTHER" id="PTHR11551">
    <property type="entry name" value="INSULIN-LIKE GROWTH FACTOR BINDING PROTEIN"/>
    <property type="match status" value="1"/>
</dbReference>
<dbReference type="PANTHER" id="PTHR11551:SF6">
    <property type="entry name" value="INSULIN-LIKE GROWTH FACTOR-BINDING PROTEIN 1"/>
    <property type="match status" value="1"/>
</dbReference>
<dbReference type="Pfam" id="PF00219">
    <property type="entry name" value="IGFBP"/>
    <property type="match status" value="1"/>
</dbReference>
<dbReference type="Pfam" id="PF00086">
    <property type="entry name" value="Thyroglobulin_1"/>
    <property type="match status" value="1"/>
</dbReference>
<dbReference type="PRINTS" id="PR01976">
    <property type="entry name" value="IGFBPFAMILY"/>
</dbReference>
<dbReference type="PRINTS" id="PR01977">
    <property type="entry name" value="IGFBPFAMILY1"/>
</dbReference>
<dbReference type="SMART" id="SM00121">
    <property type="entry name" value="IB"/>
    <property type="match status" value="1"/>
</dbReference>
<dbReference type="SMART" id="SM00211">
    <property type="entry name" value="TY"/>
    <property type="match status" value="1"/>
</dbReference>
<dbReference type="SUPFAM" id="SSF57184">
    <property type="entry name" value="Growth factor receptor domain"/>
    <property type="match status" value="1"/>
</dbReference>
<dbReference type="SUPFAM" id="SSF57610">
    <property type="entry name" value="Thyroglobulin type-1 domain"/>
    <property type="match status" value="1"/>
</dbReference>
<dbReference type="PROSITE" id="PS00222">
    <property type="entry name" value="IGFBP_N_1"/>
    <property type="match status" value="1"/>
</dbReference>
<dbReference type="PROSITE" id="PS51323">
    <property type="entry name" value="IGFBP_N_2"/>
    <property type="match status" value="1"/>
</dbReference>
<dbReference type="PROSITE" id="PS00484">
    <property type="entry name" value="THYROGLOBULIN_1_1"/>
    <property type="match status" value="1"/>
</dbReference>
<dbReference type="PROSITE" id="PS51162">
    <property type="entry name" value="THYROGLOBULIN_1_2"/>
    <property type="match status" value="1"/>
</dbReference>